<proteinExistence type="evidence at protein level"/>
<sequence length="116" mass="13376">MTNHKLIEAVTKSQLRTDLPSFRPGDTLRVHVRIIEGTRERIQVFEGIVIKRRGGGVSETFTVRKISSGVGVERTFPLHTPKIEKIEVKRRGKVRRAKLYYLRSLRGKAARIQEIR</sequence>
<organism>
    <name type="scientific">Staphylococcus aureus (strain N315)</name>
    <dbReference type="NCBI Taxonomy" id="158879"/>
    <lineage>
        <taxon>Bacteria</taxon>
        <taxon>Bacillati</taxon>
        <taxon>Bacillota</taxon>
        <taxon>Bacilli</taxon>
        <taxon>Bacillales</taxon>
        <taxon>Staphylococcaceae</taxon>
        <taxon>Staphylococcus</taxon>
    </lineage>
</organism>
<comment type="function">
    <text evidence="1">This protein is located at the 30S-50S ribosomal subunit interface and may play a role in the structure and function of the aminoacyl-tRNA binding site.</text>
</comment>
<comment type="similarity">
    <text evidence="1">Belongs to the bacterial ribosomal protein bL19 family.</text>
</comment>
<accession>P66083</accession>
<accession>Q99UM9</accession>
<name>RL19_STAAN</name>
<protein>
    <recommendedName>
        <fullName evidence="1">Large ribosomal subunit protein bL19</fullName>
    </recommendedName>
    <alternativeName>
        <fullName evidence="2">50S ribosomal protein L19</fullName>
    </alternativeName>
</protein>
<gene>
    <name evidence="1" type="primary">rplS</name>
    <name type="ordered locus">SA1084</name>
</gene>
<reference key="1">
    <citation type="journal article" date="2001" name="Lancet">
        <title>Whole genome sequencing of meticillin-resistant Staphylococcus aureus.</title>
        <authorList>
            <person name="Kuroda M."/>
            <person name="Ohta T."/>
            <person name="Uchiyama I."/>
            <person name="Baba T."/>
            <person name="Yuzawa H."/>
            <person name="Kobayashi I."/>
            <person name="Cui L."/>
            <person name="Oguchi A."/>
            <person name="Aoki K."/>
            <person name="Nagai Y."/>
            <person name="Lian J.-Q."/>
            <person name="Ito T."/>
            <person name="Kanamori M."/>
            <person name="Matsumaru H."/>
            <person name="Maruyama A."/>
            <person name="Murakami H."/>
            <person name="Hosoyama A."/>
            <person name="Mizutani-Ui Y."/>
            <person name="Takahashi N.K."/>
            <person name="Sawano T."/>
            <person name="Inoue R."/>
            <person name="Kaito C."/>
            <person name="Sekimizu K."/>
            <person name="Hirakawa H."/>
            <person name="Kuhara S."/>
            <person name="Goto S."/>
            <person name="Yabuzaki J."/>
            <person name="Kanehisa M."/>
            <person name="Yamashita A."/>
            <person name="Oshima K."/>
            <person name="Furuya K."/>
            <person name="Yoshino C."/>
            <person name="Shiba T."/>
            <person name="Hattori M."/>
            <person name="Ogasawara N."/>
            <person name="Hayashi H."/>
            <person name="Hiramatsu K."/>
        </authorList>
    </citation>
    <scope>NUCLEOTIDE SEQUENCE [LARGE SCALE GENOMIC DNA]</scope>
    <source>
        <strain>N315</strain>
    </source>
</reference>
<reference key="2">
    <citation type="submission" date="2005-11" db="UniProtKB">
        <title>Shotgun proteomic analysis of total protein extract of S. aureus S30 versus N315.</title>
        <authorList>
            <person name="Stenz L."/>
        </authorList>
    </citation>
    <scope>IDENTIFICATION BY MASS SPECTROMETRY</scope>
</reference>
<reference key="3">
    <citation type="submission" date="2007-10" db="UniProtKB">
        <title>Shotgun proteomic analysis of total and membrane protein extracts of S. aureus strain N315.</title>
        <authorList>
            <person name="Vaezzadeh A.R."/>
            <person name="Deshusses J."/>
            <person name="Lescuyer P."/>
            <person name="Hochstrasser D.F."/>
        </authorList>
    </citation>
    <scope>IDENTIFICATION BY MASS SPECTROMETRY [LARGE SCALE ANALYSIS]</scope>
    <source>
        <strain>N315</strain>
    </source>
</reference>
<dbReference type="EMBL" id="BA000018">
    <property type="protein sequence ID" value="BAB42336.1"/>
    <property type="molecule type" value="Genomic_DNA"/>
</dbReference>
<dbReference type="PIR" id="D89897">
    <property type="entry name" value="D89897"/>
</dbReference>
<dbReference type="RefSeq" id="WP_000181402.1">
    <property type="nucleotide sequence ID" value="NC_002745.2"/>
</dbReference>
<dbReference type="SMR" id="P66083"/>
<dbReference type="EnsemblBacteria" id="BAB42336">
    <property type="protein sequence ID" value="BAB42336"/>
    <property type="gene ID" value="BAB42336"/>
</dbReference>
<dbReference type="KEGG" id="sau:SA1084"/>
<dbReference type="HOGENOM" id="CLU_103507_2_1_9"/>
<dbReference type="GO" id="GO:0022625">
    <property type="term" value="C:cytosolic large ribosomal subunit"/>
    <property type="evidence" value="ECO:0007669"/>
    <property type="project" value="TreeGrafter"/>
</dbReference>
<dbReference type="GO" id="GO:0003735">
    <property type="term" value="F:structural constituent of ribosome"/>
    <property type="evidence" value="ECO:0007669"/>
    <property type="project" value="InterPro"/>
</dbReference>
<dbReference type="GO" id="GO:0006412">
    <property type="term" value="P:translation"/>
    <property type="evidence" value="ECO:0007669"/>
    <property type="project" value="UniProtKB-UniRule"/>
</dbReference>
<dbReference type="FunFam" id="2.30.30.790:FF:000001">
    <property type="entry name" value="50S ribosomal protein L19"/>
    <property type="match status" value="1"/>
</dbReference>
<dbReference type="Gene3D" id="2.30.30.790">
    <property type="match status" value="1"/>
</dbReference>
<dbReference type="HAMAP" id="MF_00402">
    <property type="entry name" value="Ribosomal_bL19"/>
    <property type="match status" value="1"/>
</dbReference>
<dbReference type="InterPro" id="IPR001857">
    <property type="entry name" value="Ribosomal_bL19"/>
</dbReference>
<dbReference type="InterPro" id="IPR018257">
    <property type="entry name" value="Ribosomal_bL19_CS"/>
</dbReference>
<dbReference type="InterPro" id="IPR038657">
    <property type="entry name" value="Ribosomal_bL19_sf"/>
</dbReference>
<dbReference type="InterPro" id="IPR008991">
    <property type="entry name" value="Translation_prot_SH3-like_sf"/>
</dbReference>
<dbReference type="NCBIfam" id="TIGR01024">
    <property type="entry name" value="rplS_bact"/>
    <property type="match status" value="1"/>
</dbReference>
<dbReference type="PANTHER" id="PTHR15680:SF9">
    <property type="entry name" value="LARGE RIBOSOMAL SUBUNIT PROTEIN BL19M"/>
    <property type="match status" value="1"/>
</dbReference>
<dbReference type="PANTHER" id="PTHR15680">
    <property type="entry name" value="RIBOSOMAL PROTEIN L19"/>
    <property type="match status" value="1"/>
</dbReference>
<dbReference type="Pfam" id="PF01245">
    <property type="entry name" value="Ribosomal_L19"/>
    <property type="match status" value="1"/>
</dbReference>
<dbReference type="PIRSF" id="PIRSF002191">
    <property type="entry name" value="Ribosomal_L19"/>
    <property type="match status" value="1"/>
</dbReference>
<dbReference type="PRINTS" id="PR00061">
    <property type="entry name" value="RIBOSOMALL19"/>
</dbReference>
<dbReference type="SUPFAM" id="SSF50104">
    <property type="entry name" value="Translation proteins SH3-like domain"/>
    <property type="match status" value="1"/>
</dbReference>
<dbReference type="PROSITE" id="PS01015">
    <property type="entry name" value="RIBOSOMAL_L19"/>
    <property type="match status" value="1"/>
</dbReference>
<feature type="chain" id="PRO_0000163530" description="Large ribosomal subunit protein bL19">
    <location>
        <begin position="1"/>
        <end position="116"/>
    </location>
</feature>
<keyword id="KW-0687">Ribonucleoprotein</keyword>
<keyword id="KW-0689">Ribosomal protein</keyword>
<evidence type="ECO:0000255" key="1">
    <source>
        <dbReference type="HAMAP-Rule" id="MF_00402"/>
    </source>
</evidence>
<evidence type="ECO:0000305" key="2"/>